<comment type="function">
    <text evidence="1">Chaperone involved in the maturation of iron-sulfur cluster-containing proteins. Has a low intrinsic ATPase activity which is markedly stimulated by HscB. Involved in the maturation of IscU.</text>
</comment>
<comment type="similarity">
    <text evidence="1">Belongs to the heat shock protein 70 family.</text>
</comment>
<feature type="chain" id="PRO_1000147718" description="Chaperone protein HscA">
    <location>
        <begin position="1"/>
        <end position="616"/>
    </location>
</feature>
<gene>
    <name evidence="1" type="primary">hscA</name>
    <name type="ordered locus">SPC_1112</name>
</gene>
<evidence type="ECO:0000255" key="1">
    <source>
        <dbReference type="HAMAP-Rule" id="MF_00679"/>
    </source>
</evidence>
<name>HSCA_SALPC</name>
<dbReference type="EMBL" id="CP000857">
    <property type="protein sequence ID" value="ACN45278.1"/>
    <property type="molecule type" value="Genomic_DNA"/>
</dbReference>
<dbReference type="RefSeq" id="WP_001196663.1">
    <property type="nucleotide sequence ID" value="NC_012125.1"/>
</dbReference>
<dbReference type="SMR" id="C0PYL1"/>
<dbReference type="KEGG" id="sei:SPC_1112"/>
<dbReference type="HOGENOM" id="CLU_005965_2_1_6"/>
<dbReference type="Proteomes" id="UP000001599">
    <property type="component" value="Chromosome"/>
</dbReference>
<dbReference type="GO" id="GO:0005524">
    <property type="term" value="F:ATP binding"/>
    <property type="evidence" value="ECO:0007669"/>
    <property type="project" value="UniProtKB-KW"/>
</dbReference>
<dbReference type="GO" id="GO:0016887">
    <property type="term" value="F:ATP hydrolysis activity"/>
    <property type="evidence" value="ECO:0007669"/>
    <property type="project" value="UniProtKB-UniRule"/>
</dbReference>
<dbReference type="GO" id="GO:0140662">
    <property type="term" value="F:ATP-dependent protein folding chaperone"/>
    <property type="evidence" value="ECO:0007669"/>
    <property type="project" value="InterPro"/>
</dbReference>
<dbReference type="GO" id="GO:0051082">
    <property type="term" value="F:unfolded protein binding"/>
    <property type="evidence" value="ECO:0007669"/>
    <property type="project" value="InterPro"/>
</dbReference>
<dbReference type="GO" id="GO:0016226">
    <property type="term" value="P:iron-sulfur cluster assembly"/>
    <property type="evidence" value="ECO:0007669"/>
    <property type="project" value="InterPro"/>
</dbReference>
<dbReference type="CDD" id="cd10236">
    <property type="entry name" value="ASKHA_NBD_HSP70_HscA"/>
    <property type="match status" value="1"/>
</dbReference>
<dbReference type="FunFam" id="1.20.1270.10:FF:000006">
    <property type="entry name" value="Chaperone protein HscA"/>
    <property type="match status" value="1"/>
</dbReference>
<dbReference type="FunFam" id="3.30.420.40:FF:000046">
    <property type="entry name" value="Chaperone protein HscA"/>
    <property type="match status" value="1"/>
</dbReference>
<dbReference type="FunFam" id="3.90.640.10:FF:000013">
    <property type="entry name" value="Chaperone protein HscA"/>
    <property type="match status" value="1"/>
</dbReference>
<dbReference type="FunFam" id="2.60.34.10:FF:000005">
    <property type="entry name" value="Chaperone protein HscA homolog"/>
    <property type="match status" value="1"/>
</dbReference>
<dbReference type="Gene3D" id="1.20.1270.10">
    <property type="match status" value="1"/>
</dbReference>
<dbReference type="Gene3D" id="3.30.420.40">
    <property type="match status" value="2"/>
</dbReference>
<dbReference type="Gene3D" id="3.90.640.10">
    <property type="entry name" value="Actin, Chain A, domain 4"/>
    <property type="match status" value="1"/>
</dbReference>
<dbReference type="Gene3D" id="2.60.34.10">
    <property type="entry name" value="Substrate Binding Domain Of DNAk, Chain A, domain 1"/>
    <property type="match status" value="1"/>
</dbReference>
<dbReference type="HAMAP" id="MF_00679">
    <property type="entry name" value="HscA"/>
    <property type="match status" value="1"/>
</dbReference>
<dbReference type="InterPro" id="IPR043129">
    <property type="entry name" value="ATPase_NBD"/>
</dbReference>
<dbReference type="InterPro" id="IPR018181">
    <property type="entry name" value="Heat_shock_70_CS"/>
</dbReference>
<dbReference type="InterPro" id="IPR042039">
    <property type="entry name" value="HscA_NBD"/>
</dbReference>
<dbReference type="InterPro" id="IPR029048">
    <property type="entry name" value="HSP70_C_sf"/>
</dbReference>
<dbReference type="InterPro" id="IPR029047">
    <property type="entry name" value="HSP70_peptide-bd_sf"/>
</dbReference>
<dbReference type="InterPro" id="IPR013126">
    <property type="entry name" value="Hsp_70_fam"/>
</dbReference>
<dbReference type="InterPro" id="IPR010236">
    <property type="entry name" value="ISC_FeS_clus_asmbl_HscA"/>
</dbReference>
<dbReference type="NCBIfam" id="TIGR01991">
    <property type="entry name" value="HscA"/>
    <property type="match status" value="1"/>
</dbReference>
<dbReference type="NCBIfam" id="NF003520">
    <property type="entry name" value="PRK05183.1"/>
    <property type="match status" value="1"/>
</dbReference>
<dbReference type="PANTHER" id="PTHR19375">
    <property type="entry name" value="HEAT SHOCK PROTEIN 70KDA"/>
    <property type="match status" value="1"/>
</dbReference>
<dbReference type="Pfam" id="PF00012">
    <property type="entry name" value="HSP70"/>
    <property type="match status" value="1"/>
</dbReference>
<dbReference type="PRINTS" id="PR00301">
    <property type="entry name" value="HEATSHOCK70"/>
</dbReference>
<dbReference type="SUPFAM" id="SSF53067">
    <property type="entry name" value="Actin-like ATPase domain"/>
    <property type="match status" value="2"/>
</dbReference>
<dbReference type="SUPFAM" id="SSF100934">
    <property type="entry name" value="Heat shock protein 70kD (HSP70), C-terminal subdomain"/>
    <property type="match status" value="1"/>
</dbReference>
<dbReference type="SUPFAM" id="SSF100920">
    <property type="entry name" value="Heat shock protein 70kD (HSP70), peptide-binding domain"/>
    <property type="match status" value="1"/>
</dbReference>
<dbReference type="PROSITE" id="PS00297">
    <property type="entry name" value="HSP70_1"/>
    <property type="match status" value="1"/>
</dbReference>
<dbReference type="PROSITE" id="PS00329">
    <property type="entry name" value="HSP70_2"/>
    <property type="match status" value="1"/>
</dbReference>
<dbReference type="PROSITE" id="PS01036">
    <property type="entry name" value="HSP70_3"/>
    <property type="match status" value="1"/>
</dbReference>
<organism>
    <name type="scientific">Salmonella paratyphi C (strain RKS4594)</name>
    <dbReference type="NCBI Taxonomy" id="476213"/>
    <lineage>
        <taxon>Bacteria</taxon>
        <taxon>Pseudomonadati</taxon>
        <taxon>Pseudomonadota</taxon>
        <taxon>Gammaproteobacteria</taxon>
        <taxon>Enterobacterales</taxon>
        <taxon>Enterobacteriaceae</taxon>
        <taxon>Salmonella</taxon>
    </lineage>
</organism>
<reference key="1">
    <citation type="journal article" date="2009" name="PLoS ONE">
        <title>Salmonella paratyphi C: genetic divergence from Salmonella choleraesuis and pathogenic convergence with Salmonella typhi.</title>
        <authorList>
            <person name="Liu W.-Q."/>
            <person name="Feng Y."/>
            <person name="Wang Y."/>
            <person name="Zou Q.-H."/>
            <person name="Chen F."/>
            <person name="Guo J.-T."/>
            <person name="Peng Y.-H."/>
            <person name="Jin Y."/>
            <person name="Li Y.-G."/>
            <person name="Hu S.-N."/>
            <person name="Johnston R.N."/>
            <person name="Liu G.-R."/>
            <person name="Liu S.-L."/>
        </authorList>
    </citation>
    <scope>NUCLEOTIDE SEQUENCE [LARGE SCALE GENOMIC DNA]</scope>
    <source>
        <strain>RKS4594</strain>
    </source>
</reference>
<protein>
    <recommendedName>
        <fullName evidence="1">Chaperone protein HscA</fullName>
    </recommendedName>
    <alternativeName>
        <fullName evidence="1">Hsc66</fullName>
    </alternativeName>
</protein>
<sequence>MALLQISEPGLSAAPHQRRLAAGIDLGTTNSLVATVRSGQAETLPDHEGRHLLPSVVHYQQQGHTVGYAARDNAAQDTANTISSVKRMMGRSLADIQARYPHLPYRFKASVNGLPMIDTSAGLLNPVRVSADILKALAARASESLSGELDGVVITVPAYFDDAQRQGTKDAARLAGLHVLRLLNEPTAAAIAYGLDSGKEGVIAVYDLGGGTFDISILRLSRGVFEVLATGGDSALGGDDFDHLLADYIREQAGIADRSDNRVQRELLDAAIAAKIALSDADTVRVNVAGWQGEITREQFNDLISALVKRTLLACRRALKDAGVEPQDVLEVVMVGGSTRVPLVRERVGEFFGRTPLTAIDPDKVVAIGAAIQADILVGNKPDSEMLLLDVIPLSLGLETMGGLVEKVIPRNTTIPVARAQDFTTFKDGQTAMSIHVMQGERELVQDCRSLARFALRGIPPLPAGGAHIRVTFQVDADGLLSVTAMEKSTGVEASIQVKPSYGLTDGEIASMIKDSMSFAEQDVKARMLAEQKVEAARVLESLTGALTADAALLSAAERQCIDDAAAHLSAVAQGDDVDAIEQAIKNVDKQTQEFAARRMDQSVRRALKGHSVDEV</sequence>
<accession>C0PYL1</accession>
<keyword id="KW-0067">ATP-binding</keyword>
<keyword id="KW-0143">Chaperone</keyword>
<keyword id="KW-0547">Nucleotide-binding</keyword>
<proteinExistence type="inferred from homology"/>